<proteinExistence type="evidence at protein level"/>
<name>SST_FRAAD</name>
<gene>
    <name evidence="6" type="ordered locus">Fraau_1049</name>
</gene>
<keyword id="KW-0012">Acyltransferase</keyword>
<keyword id="KW-0028">Amino-acid biosynthesis</keyword>
<keyword id="KW-0198">Cysteine biosynthesis</keyword>
<keyword id="KW-0963">Cytoplasm</keyword>
<keyword id="KW-1185">Reference proteome</keyword>
<keyword id="KW-0808">Transferase</keyword>
<comment type="function">
    <text evidence="2">Transfers a succinyl group from succinyl-CoA to L-serine, forming succinyl-L-serine. In vitro, also has homoserine succinyl transferase activity.</text>
</comment>
<comment type="catalytic activity">
    <reaction evidence="1 2">
        <text>succinyl-CoA + L-serine = O-succinyl-L-serine + CoA</text>
        <dbReference type="Rhea" id="RHEA:52820"/>
        <dbReference type="ChEBI" id="CHEBI:33384"/>
        <dbReference type="ChEBI" id="CHEBI:57287"/>
        <dbReference type="ChEBI" id="CHEBI:57292"/>
        <dbReference type="ChEBI" id="CHEBI:136856"/>
    </reaction>
</comment>
<comment type="catalytic activity">
    <reaction evidence="2">
        <text>L-homoserine + succinyl-CoA = O-succinyl-L-homoserine + CoA</text>
        <dbReference type="Rhea" id="RHEA:22008"/>
        <dbReference type="ChEBI" id="CHEBI:57287"/>
        <dbReference type="ChEBI" id="CHEBI:57292"/>
        <dbReference type="ChEBI" id="CHEBI:57476"/>
        <dbReference type="ChEBI" id="CHEBI:57661"/>
        <dbReference type="EC" id="2.3.1.46"/>
    </reaction>
</comment>
<comment type="pathway">
    <text evidence="1 5">Amino-acid biosynthesis; L-cysteine biosynthesis; L-cysteine from L-serine: step 1/2.</text>
</comment>
<comment type="subunit">
    <text evidence="1">Homodimer.</text>
</comment>
<comment type="subcellular location">
    <subcellularLocation>
        <location evidence="1">Cytoplasm</location>
    </subcellularLocation>
</comment>
<comment type="similarity">
    <text evidence="1">Belongs to the AB hydrolase superfamily. MetX family.</text>
</comment>
<dbReference type="EC" id="2.3.1.-" evidence="1 2"/>
<dbReference type="EC" id="2.3.1.46" evidence="2"/>
<dbReference type="EMBL" id="CP003350">
    <property type="protein sequence ID" value="AFC85510.1"/>
    <property type="molecule type" value="Genomic_DNA"/>
</dbReference>
<dbReference type="RefSeq" id="WP_014402516.1">
    <property type="nucleotide sequence ID" value="NC_017033.1"/>
</dbReference>
<dbReference type="SMR" id="H8L374"/>
<dbReference type="STRING" id="767434.Fraau_1049"/>
<dbReference type="ESTHER" id="fraad-sst">
    <property type="family name" value="Homoserine_transacetylase"/>
</dbReference>
<dbReference type="KEGG" id="fau:Fraau_1049"/>
<dbReference type="eggNOG" id="COG2021">
    <property type="taxonomic scope" value="Bacteria"/>
</dbReference>
<dbReference type="HOGENOM" id="CLU_028760_1_2_6"/>
<dbReference type="OrthoDB" id="9800754at2"/>
<dbReference type="UniPathway" id="UPA00136">
    <property type="reaction ID" value="UER00199"/>
</dbReference>
<dbReference type="Proteomes" id="UP000005234">
    <property type="component" value="Chromosome"/>
</dbReference>
<dbReference type="GO" id="GO:0005737">
    <property type="term" value="C:cytoplasm"/>
    <property type="evidence" value="ECO:0007669"/>
    <property type="project" value="UniProtKB-SubCell"/>
</dbReference>
<dbReference type="GO" id="GO:0004414">
    <property type="term" value="F:homoserine O-acetyltransferase activity"/>
    <property type="evidence" value="ECO:0007669"/>
    <property type="project" value="TreeGrafter"/>
</dbReference>
<dbReference type="GO" id="GO:0008899">
    <property type="term" value="F:homoserine O-succinyltransferase activity"/>
    <property type="evidence" value="ECO:0007669"/>
    <property type="project" value="UniProtKB-EC"/>
</dbReference>
<dbReference type="GO" id="GO:0160210">
    <property type="term" value="F:L-serine O-succinyltransferase activity"/>
    <property type="evidence" value="ECO:0007669"/>
    <property type="project" value="RHEA"/>
</dbReference>
<dbReference type="GO" id="GO:0006535">
    <property type="term" value="P:cysteine biosynthetic process from serine"/>
    <property type="evidence" value="ECO:0007669"/>
    <property type="project" value="UniProtKB-UniRule"/>
</dbReference>
<dbReference type="GO" id="GO:0009092">
    <property type="term" value="P:homoserine metabolic process"/>
    <property type="evidence" value="ECO:0007669"/>
    <property type="project" value="TreeGrafter"/>
</dbReference>
<dbReference type="GO" id="GO:0009086">
    <property type="term" value="P:methionine biosynthetic process"/>
    <property type="evidence" value="ECO:0007669"/>
    <property type="project" value="TreeGrafter"/>
</dbReference>
<dbReference type="Gene3D" id="1.10.1740.110">
    <property type="match status" value="1"/>
</dbReference>
<dbReference type="Gene3D" id="3.40.50.1820">
    <property type="entry name" value="alpha/beta hydrolase"/>
    <property type="match status" value="1"/>
</dbReference>
<dbReference type="HAMAP" id="MF_00296">
    <property type="entry name" value="MetX_acyltransf"/>
    <property type="match status" value="1"/>
</dbReference>
<dbReference type="InterPro" id="IPR000073">
    <property type="entry name" value="AB_hydrolase_1"/>
</dbReference>
<dbReference type="InterPro" id="IPR029058">
    <property type="entry name" value="AB_hydrolase_fold"/>
</dbReference>
<dbReference type="InterPro" id="IPR008220">
    <property type="entry name" value="HAT_MetX-like"/>
</dbReference>
<dbReference type="NCBIfam" id="TIGR01392">
    <property type="entry name" value="homoserO_Ac_trn"/>
    <property type="match status" value="1"/>
</dbReference>
<dbReference type="NCBIfam" id="NF001209">
    <property type="entry name" value="PRK00175.1"/>
    <property type="match status" value="1"/>
</dbReference>
<dbReference type="PANTHER" id="PTHR32268">
    <property type="entry name" value="HOMOSERINE O-ACETYLTRANSFERASE"/>
    <property type="match status" value="1"/>
</dbReference>
<dbReference type="PANTHER" id="PTHR32268:SF11">
    <property type="entry name" value="HOMOSERINE O-ACETYLTRANSFERASE"/>
    <property type="match status" value="1"/>
</dbReference>
<dbReference type="Pfam" id="PF00561">
    <property type="entry name" value="Abhydrolase_1"/>
    <property type="match status" value="1"/>
</dbReference>
<dbReference type="PIRSF" id="PIRSF000443">
    <property type="entry name" value="Homoser_Ac_trans"/>
    <property type="match status" value="1"/>
</dbReference>
<dbReference type="SUPFAM" id="SSF53474">
    <property type="entry name" value="alpha/beta-Hydrolases"/>
    <property type="match status" value="1"/>
</dbReference>
<protein>
    <recommendedName>
        <fullName evidence="1 4">Serine O-succinyltransferase</fullName>
        <shortName evidence="1 3">SST</shortName>
        <ecNumber evidence="1 2">2.3.1.-</ecNumber>
    </recommendedName>
    <alternativeName>
        <fullName evidence="4">Homoserine O-succinyltransferase</fullName>
        <shortName evidence="3">HST</shortName>
        <ecNumber evidence="2">2.3.1.46</ecNumber>
    </alternativeName>
    <alternativeName>
        <fullName evidence="4">Homoserine transsuccinylase</fullName>
        <shortName evidence="4">HTS</shortName>
    </alternativeName>
</protein>
<evidence type="ECO:0000255" key="1">
    <source>
        <dbReference type="HAMAP-Rule" id="MF_00296"/>
    </source>
</evidence>
<evidence type="ECO:0000269" key="2">
    <source>
    </source>
</evidence>
<evidence type="ECO:0000303" key="3">
    <source>
    </source>
</evidence>
<evidence type="ECO:0000305" key="4"/>
<evidence type="ECO:0000305" key="5">
    <source>
    </source>
</evidence>
<evidence type="ECO:0000312" key="6">
    <source>
        <dbReference type="EMBL" id="AFC85510.1"/>
    </source>
</evidence>
<feature type="chain" id="PRO_0000440307" description="Serine O-succinyltransferase">
    <location>
        <begin position="1"/>
        <end position="367"/>
    </location>
</feature>
<feature type="domain" description="AB hydrolase-1" evidence="1">
    <location>
        <begin position="41"/>
        <end position="351"/>
    </location>
</feature>
<feature type="region of interest" description="Important for substrate specificity" evidence="1 5">
    <location>
        <begin position="48"/>
        <end position="51"/>
    </location>
</feature>
<feature type="active site" description="Nucleophile" evidence="1">
    <location>
        <position position="146"/>
    </location>
</feature>
<feature type="active site" evidence="1">
    <location>
        <position position="313"/>
    </location>
</feature>
<feature type="active site" evidence="1">
    <location>
        <position position="346"/>
    </location>
</feature>
<feature type="binding site" evidence="1">
    <location>
        <position position="215"/>
    </location>
    <ligand>
        <name>substrate</name>
    </ligand>
</feature>
<feature type="binding site" evidence="1">
    <location>
        <position position="347"/>
    </location>
    <ligand>
        <name>substrate</name>
    </ligand>
</feature>
<feature type="site" description="Important for acyl-CoA specificity" evidence="1 5">
    <location>
        <position position="183"/>
    </location>
</feature>
<accession>H8L374</accession>
<organism>
    <name type="scientific">Frateuria aurantia (strain ATCC 33424 / DSM 6220 / KCTC 2777 / LMG 1558 / NBRC 3245 / NCIMB 13370)</name>
    <name type="common">Acetobacter aurantius</name>
    <dbReference type="NCBI Taxonomy" id="767434"/>
    <lineage>
        <taxon>Bacteria</taxon>
        <taxon>Pseudomonadati</taxon>
        <taxon>Pseudomonadota</taxon>
        <taxon>Gammaproteobacteria</taxon>
        <taxon>Lysobacterales</taxon>
        <taxon>Rhodanobacteraceae</taxon>
        <taxon>Frateuria</taxon>
    </lineage>
</organism>
<reference key="1">
    <citation type="submission" date="2012-02" db="EMBL/GenBank/DDBJ databases">
        <title>The complete genome of Frateuria aurantia DSM 6220.</title>
        <authorList>
            <person name="Lucas S."/>
            <person name="Copeland A."/>
            <person name="Lapidus A."/>
            <person name="Glavina del Rio T."/>
            <person name="Dalin E."/>
            <person name="Tice H."/>
            <person name="Bruce D."/>
            <person name="Goodwin L."/>
            <person name="Pitluck S."/>
            <person name="Peters L."/>
            <person name="Ovchinnikova G."/>
            <person name="Teshima H."/>
            <person name="Kyrpides N."/>
            <person name="Mavromatis K."/>
            <person name="Ivanova N."/>
            <person name="Brettin T."/>
            <person name="Detter J.C."/>
            <person name="Han C."/>
            <person name="Larimer F."/>
            <person name="Land M."/>
            <person name="Hauser L."/>
            <person name="Markowitz V."/>
            <person name="Cheng J.-F."/>
            <person name="Hugenholtz P."/>
            <person name="Woyke T."/>
            <person name="Wu D."/>
            <person name="Brambilla E."/>
            <person name="Klenk H.-P."/>
            <person name="Eisen J.A."/>
        </authorList>
    </citation>
    <scope>NUCLEOTIDE SEQUENCE [LARGE SCALE GENOMIC DNA]</scope>
    <source>
        <strain>ATCC 33424 / DSM 6220 / KCTC 2777 / LMG 1558 / NBRC 3245 / NCIMB 13370</strain>
    </source>
</reference>
<reference key="2">
    <citation type="journal article" date="2017" name="Nat. Chem. Biol.">
        <title>Parallel evolution of non-homologous isofunctional enzymes in methionine biosynthesis.</title>
        <authorList>
            <person name="Bastard K."/>
            <person name="Perret A."/>
            <person name="Mariage A."/>
            <person name="Bessonnet T."/>
            <person name="Pinet-Turpault A."/>
            <person name="Petit J.L."/>
            <person name="Darii E."/>
            <person name="Bazire P."/>
            <person name="Vergne-Vaxelaire C."/>
            <person name="Brewee C."/>
            <person name="Debard A."/>
            <person name="Pellouin V."/>
            <person name="Besnard-Gonnet M."/>
            <person name="Artiguenave F."/>
            <person name="Medigue C."/>
            <person name="Vallenet D."/>
            <person name="Danchin A."/>
            <person name="Zaparucha A."/>
            <person name="Weissenbach J."/>
            <person name="Salanoubat M."/>
            <person name="de Berardinis V."/>
        </authorList>
    </citation>
    <scope>FUNCTION</scope>
    <scope>CATALYTIC ACTIVITY</scope>
    <scope>PATHWAY</scope>
</reference>
<sequence>MSDARRYHALPSPFPMKRGGQLQGARLAYETWGRLSPGCDNAVLILTGLSPSAHAASHPDGDTSPGWWEGMLGPGKAIDTDRWYVICVNSLGSDKGSTGPASPDPATGAPYRLSFPELALEDVASAAHDLVKALGIARLACLIGCSMGGMSALAYMLQYEGEVEAHISVDTAPQAQPFAIAIRSLQREAIRLDPNWQDGHYTDAAYPETGMAMARKLGVITYRSAMEWNGRFARIRLDGDQRPDEPFAREFQVESYLEHHAQRFVRRFDPACYLYLTRASDWFDVAEYGEGSVMQGLARIHVRRALVIGVSTDILFPLEQQQQIAEGLQAAGAEVDFVALDSPQGHDAFLVDIENYSAAIGGFLRTL</sequence>